<proteinExistence type="inferred from homology"/>
<organism>
    <name type="scientific">Yersinia pseudotuberculosis serotype IB (strain PB1/+)</name>
    <dbReference type="NCBI Taxonomy" id="502801"/>
    <lineage>
        <taxon>Bacteria</taxon>
        <taxon>Pseudomonadati</taxon>
        <taxon>Pseudomonadota</taxon>
        <taxon>Gammaproteobacteria</taxon>
        <taxon>Enterobacterales</taxon>
        <taxon>Yersiniaceae</taxon>
        <taxon>Yersinia</taxon>
    </lineage>
</organism>
<sequence>MLERIKGCFTESIQTQIAAAEALPDAISCAAMALVQSLLNGNKILCCGNGTSAANAQHFAASMINRFETERPSLPAIALNADNVVLTAITNDRLHDEVYAKQVRALGQAGDVLLAISTRGNSRDIVKAVEAAVTRDMTIVALTGYDGGELAGLLGQLDVEIRIPSHRGARVQELHMLTVNCLCDLIDNTLFPHQDD</sequence>
<feature type="chain" id="PRO_1000137804" description="DnaA initiator-associating protein DiaA">
    <location>
        <begin position="1"/>
        <end position="196"/>
    </location>
</feature>
<feature type="domain" description="SIS" evidence="1">
    <location>
        <begin position="34"/>
        <end position="196"/>
    </location>
</feature>
<comment type="function">
    <text evidence="1">Required for the timely initiation of chromosomal replication via direct interactions with the DnaA initiator protein.</text>
</comment>
<comment type="subunit">
    <text evidence="1">Homotetramer; dimer of dimers.</text>
</comment>
<comment type="similarity">
    <text evidence="1">Belongs to the SIS family. DiaA subfamily.</text>
</comment>
<name>DIAA_YERPB</name>
<gene>
    <name evidence="1" type="primary">diaA</name>
    <name type="ordered locus">YPTS_3680</name>
</gene>
<dbReference type="EMBL" id="CP001048">
    <property type="protein sequence ID" value="ACC90633.1"/>
    <property type="molecule type" value="Genomic_DNA"/>
</dbReference>
<dbReference type="RefSeq" id="WP_011193139.1">
    <property type="nucleotide sequence ID" value="NZ_CP009780.1"/>
</dbReference>
<dbReference type="SMR" id="B2K3Y4"/>
<dbReference type="GeneID" id="96662986"/>
<dbReference type="KEGG" id="ypb:YPTS_3680"/>
<dbReference type="PATRIC" id="fig|502801.10.peg.3135"/>
<dbReference type="GO" id="GO:0097367">
    <property type="term" value="F:carbohydrate derivative binding"/>
    <property type="evidence" value="ECO:0007669"/>
    <property type="project" value="InterPro"/>
</dbReference>
<dbReference type="GO" id="GO:1901135">
    <property type="term" value="P:carbohydrate derivative metabolic process"/>
    <property type="evidence" value="ECO:0007669"/>
    <property type="project" value="InterPro"/>
</dbReference>
<dbReference type="GO" id="GO:0006260">
    <property type="term" value="P:DNA replication"/>
    <property type="evidence" value="ECO:0007669"/>
    <property type="project" value="UniProtKB-UniRule"/>
</dbReference>
<dbReference type="CDD" id="cd05006">
    <property type="entry name" value="SIS_GmhA"/>
    <property type="match status" value="1"/>
</dbReference>
<dbReference type="FunFam" id="3.40.50.10490:FF:000006">
    <property type="entry name" value="DnaA initiator-associating protein DiaA"/>
    <property type="match status" value="1"/>
</dbReference>
<dbReference type="Gene3D" id="3.40.50.10490">
    <property type="entry name" value="Glucose-6-phosphate isomerase like protein, domain 1"/>
    <property type="match status" value="1"/>
</dbReference>
<dbReference type="HAMAP" id="MF_01157">
    <property type="entry name" value="SIS_DiaA"/>
    <property type="match status" value="1"/>
</dbReference>
<dbReference type="InterPro" id="IPR023070">
    <property type="entry name" value="DiaA"/>
</dbReference>
<dbReference type="InterPro" id="IPR035461">
    <property type="entry name" value="GmhA/DiaA"/>
</dbReference>
<dbReference type="InterPro" id="IPR001347">
    <property type="entry name" value="SIS_dom"/>
</dbReference>
<dbReference type="InterPro" id="IPR046348">
    <property type="entry name" value="SIS_dom_sf"/>
</dbReference>
<dbReference type="InterPro" id="IPR050099">
    <property type="entry name" value="SIS_GmhA/DiaA_subfam"/>
</dbReference>
<dbReference type="NCBIfam" id="NF008138">
    <property type="entry name" value="PRK10886.1"/>
    <property type="match status" value="1"/>
</dbReference>
<dbReference type="PANTHER" id="PTHR30390:SF6">
    <property type="entry name" value="DNAA INITIATOR-ASSOCIATING PROTEIN DIAA"/>
    <property type="match status" value="1"/>
</dbReference>
<dbReference type="PANTHER" id="PTHR30390">
    <property type="entry name" value="SEDOHEPTULOSE 7-PHOSPHATE ISOMERASE / DNAA INITIATOR-ASSOCIATING FACTOR FOR REPLICATION INITIATION"/>
    <property type="match status" value="1"/>
</dbReference>
<dbReference type="Pfam" id="PF13580">
    <property type="entry name" value="SIS_2"/>
    <property type="match status" value="1"/>
</dbReference>
<dbReference type="SUPFAM" id="SSF53697">
    <property type="entry name" value="SIS domain"/>
    <property type="match status" value="1"/>
</dbReference>
<dbReference type="PROSITE" id="PS51464">
    <property type="entry name" value="SIS"/>
    <property type="match status" value="1"/>
</dbReference>
<reference key="1">
    <citation type="submission" date="2008-04" db="EMBL/GenBank/DDBJ databases">
        <title>Complete sequence of Yersinia pseudotuberculosis PB1/+.</title>
        <authorList>
            <person name="Copeland A."/>
            <person name="Lucas S."/>
            <person name="Lapidus A."/>
            <person name="Glavina del Rio T."/>
            <person name="Dalin E."/>
            <person name="Tice H."/>
            <person name="Bruce D."/>
            <person name="Goodwin L."/>
            <person name="Pitluck S."/>
            <person name="Munk A.C."/>
            <person name="Brettin T."/>
            <person name="Detter J.C."/>
            <person name="Han C."/>
            <person name="Tapia R."/>
            <person name="Schmutz J."/>
            <person name="Larimer F."/>
            <person name="Land M."/>
            <person name="Hauser L."/>
            <person name="Challacombe J.F."/>
            <person name="Green L."/>
            <person name="Lindler L.E."/>
            <person name="Nikolich M.P."/>
            <person name="Richardson P."/>
        </authorList>
    </citation>
    <scope>NUCLEOTIDE SEQUENCE [LARGE SCALE GENOMIC DNA]</scope>
    <source>
        <strain>PB1/+</strain>
    </source>
</reference>
<protein>
    <recommendedName>
        <fullName evidence="1">DnaA initiator-associating protein DiaA</fullName>
    </recommendedName>
</protein>
<accession>B2K3Y4</accession>
<evidence type="ECO:0000255" key="1">
    <source>
        <dbReference type="HAMAP-Rule" id="MF_01157"/>
    </source>
</evidence>
<keyword id="KW-0235">DNA replication</keyword>